<protein>
    <recommendedName>
        <fullName evidence="1">Orotate phosphoribosyltransferase</fullName>
        <shortName evidence="1">OPRT</shortName>
        <shortName evidence="1">OPRTase</shortName>
        <ecNumber evidence="1">2.4.2.10</ecNumber>
    </recommendedName>
</protein>
<feature type="chain" id="PRO_0000110683" description="Orotate phosphoribosyltransferase">
    <location>
        <begin position="1"/>
        <end position="202"/>
    </location>
</feature>
<feature type="binding site" evidence="1">
    <location>
        <position position="93"/>
    </location>
    <ligand>
        <name>5-phospho-alpha-D-ribose 1-diphosphate</name>
        <dbReference type="ChEBI" id="CHEBI:58017"/>
        <note>ligand shared between dimeric partners</note>
    </ligand>
</feature>
<feature type="binding site" description="in other chain" evidence="1">
    <location>
        <begin position="113"/>
        <end position="121"/>
    </location>
    <ligand>
        <name>5-phospho-alpha-D-ribose 1-diphosphate</name>
        <dbReference type="ChEBI" id="CHEBI:58017"/>
        <note>ligand shared between dimeric partners</note>
    </ligand>
</feature>
<feature type="binding site" evidence="1">
    <location>
        <position position="117"/>
    </location>
    <ligand>
        <name>orotate</name>
        <dbReference type="ChEBI" id="CHEBI:30839"/>
    </ligand>
</feature>
<feature type="binding site" evidence="1">
    <location>
        <position position="145"/>
    </location>
    <ligand>
        <name>orotate</name>
        <dbReference type="ChEBI" id="CHEBI:30839"/>
    </ligand>
</feature>
<sequence>MNLEQIYKDCGAYLEGHFLLSSGKHSQFYLQSAKVLEDPKLAAKLCDELAKIIASYKIEFDSICSPALGGILAGYELARACSKRFIFTERVNKEMTLRRGFEVKKGEKFIICEDIITTGGSALESAKIIESLGGIVVGFAALANRGFCAVENLKSPRKDNAKLPENLPLFTLGNFEFEIYDETNCPLCKKGNKAIKPGSRGN</sequence>
<proteinExistence type="inferred from homology"/>
<gene>
    <name evidence="1" type="primary">pyrE</name>
    <name type="ordered locus">Cj0233c</name>
</gene>
<reference key="1">
    <citation type="journal article" date="2000" name="Nature">
        <title>The genome sequence of the food-borne pathogen Campylobacter jejuni reveals hypervariable sequences.</title>
        <authorList>
            <person name="Parkhill J."/>
            <person name="Wren B.W."/>
            <person name="Mungall K.L."/>
            <person name="Ketley J.M."/>
            <person name="Churcher C.M."/>
            <person name="Basham D."/>
            <person name="Chillingworth T."/>
            <person name="Davies R.M."/>
            <person name="Feltwell T."/>
            <person name="Holroyd S."/>
            <person name="Jagels K."/>
            <person name="Karlyshev A.V."/>
            <person name="Moule S."/>
            <person name="Pallen M.J."/>
            <person name="Penn C.W."/>
            <person name="Quail M.A."/>
            <person name="Rajandream M.A."/>
            <person name="Rutherford K.M."/>
            <person name="van Vliet A.H.M."/>
            <person name="Whitehead S."/>
            <person name="Barrell B.G."/>
        </authorList>
    </citation>
    <scope>NUCLEOTIDE SEQUENCE [LARGE SCALE GENOMIC DNA]</scope>
    <source>
        <strain>ATCC 700819 / NCTC 11168</strain>
    </source>
</reference>
<name>PYRE_CAMJE</name>
<dbReference type="EC" id="2.4.2.10" evidence="1"/>
<dbReference type="EMBL" id="AL111168">
    <property type="protein sequence ID" value="CAL34388.1"/>
    <property type="molecule type" value="Genomic_DNA"/>
</dbReference>
<dbReference type="PIR" id="A81441">
    <property type="entry name" value="A81441"/>
</dbReference>
<dbReference type="RefSeq" id="WP_002851820.1">
    <property type="nucleotide sequence ID" value="NZ_SZUC01000006.1"/>
</dbReference>
<dbReference type="RefSeq" id="YP_002343676.1">
    <property type="nucleotide sequence ID" value="NC_002163.1"/>
</dbReference>
<dbReference type="SMR" id="Q9PIR1"/>
<dbReference type="IntAct" id="Q9PIR1">
    <property type="interactions" value="25"/>
</dbReference>
<dbReference type="STRING" id="192222.Cj0233c"/>
<dbReference type="PaxDb" id="192222-Cj0233c"/>
<dbReference type="EnsemblBacteria" id="CAL34388">
    <property type="protein sequence ID" value="CAL34388"/>
    <property type="gene ID" value="Cj0233c"/>
</dbReference>
<dbReference type="GeneID" id="904560"/>
<dbReference type="KEGG" id="cje:Cj0233c"/>
<dbReference type="PATRIC" id="fig|192222.6.peg.227"/>
<dbReference type="eggNOG" id="COG0461">
    <property type="taxonomic scope" value="Bacteria"/>
</dbReference>
<dbReference type="HOGENOM" id="CLU_074878_3_0_7"/>
<dbReference type="OrthoDB" id="9783570at2"/>
<dbReference type="UniPathway" id="UPA00070">
    <property type="reaction ID" value="UER00119"/>
</dbReference>
<dbReference type="Proteomes" id="UP000000799">
    <property type="component" value="Chromosome"/>
</dbReference>
<dbReference type="GO" id="GO:0000287">
    <property type="term" value="F:magnesium ion binding"/>
    <property type="evidence" value="ECO:0007669"/>
    <property type="project" value="UniProtKB-UniRule"/>
</dbReference>
<dbReference type="GO" id="GO:0004588">
    <property type="term" value="F:orotate phosphoribosyltransferase activity"/>
    <property type="evidence" value="ECO:0007669"/>
    <property type="project" value="UniProtKB-UniRule"/>
</dbReference>
<dbReference type="GO" id="GO:0044205">
    <property type="term" value="P:'de novo' UMP biosynthetic process"/>
    <property type="evidence" value="ECO:0007669"/>
    <property type="project" value="UniProtKB-UniRule"/>
</dbReference>
<dbReference type="GO" id="GO:0019856">
    <property type="term" value="P:pyrimidine nucleobase biosynthetic process"/>
    <property type="evidence" value="ECO:0007669"/>
    <property type="project" value="InterPro"/>
</dbReference>
<dbReference type="CDD" id="cd06223">
    <property type="entry name" value="PRTases_typeI"/>
    <property type="match status" value="1"/>
</dbReference>
<dbReference type="Gene3D" id="3.40.50.2020">
    <property type="match status" value="1"/>
</dbReference>
<dbReference type="HAMAP" id="MF_01208">
    <property type="entry name" value="PyrE"/>
    <property type="match status" value="1"/>
</dbReference>
<dbReference type="InterPro" id="IPR023031">
    <property type="entry name" value="OPRT"/>
</dbReference>
<dbReference type="InterPro" id="IPR006273">
    <property type="entry name" value="Orotate_PRibTrfase_bac"/>
</dbReference>
<dbReference type="InterPro" id="IPR000836">
    <property type="entry name" value="PRibTrfase_dom"/>
</dbReference>
<dbReference type="InterPro" id="IPR029057">
    <property type="entry name" value="PRTase-like"/>
</dbReference>
<dbReference type="NCBIfam" id="TIGR01367">
    <property type="entry name" value="pyrE_Therm"/>
    <property type="match status" value="1"/>
</dbReference>
<dbReference type="PANTHER" id="PTHR19278">
    <property type="entry name" value="OROTATE PHOSPHORIBOSYLTRANSFERASE"/>
    <property type="match status" value="1"/>
</dbReference>
<dbReference type="PANTHER" id="PTHR19278:SF9">
    <property type="entry name" value="URIDINE 5'-MONOPHOSPHATE SYNTHASE"/>
    <property type="match status" value="1"/>
</dbReference>
<dbReference type="Pfam" id="PF00156">
    <property type="entry name" value="Pribosyltran"/>
    <property type="match status" value="1"/>
</dbReference>
<dbReference type="SUPFAM" id="SSF53271">
    <property type="entry name" value="PRTase-like"/>
    <property type="match status" value="1"/>
</dbReference>
<dbReference type="PROSITE" id="PS00103">
    <property type="entry name" value="PUR_PYR_PR_TRANSFER"/>
    <property type="match status" value="1"/>
</dbReference>
<accession>Q9PIR1</accession>
<accession>Q0PBS1</accession>
<evidence type="ECO:0000255" key="1">
    <source>
        <dbReference type="HAMAP-Rule" id="MF_01208"/>
    </source>
</evidence>
<organism>
    <name type="scientific">Campylobacter jejuni subsp. jejuni serotype O:2 (strain ATCC 700819 / NCTC 11168)</name>
    <dbReference type="NCBI Taxonomy" id="192222"/>
    <lineage>
        <taxon>Bacteria</taxon>
        <taxon>Pseudomonadati</taxon>
        <taxon>Campylobacterota</taxon>
        <taxon>Epsilonproteobacteria</taxon>
        <taxon>Campylobacterales</taxon>
        <taxon>Campylobacteraceae</taxon>
        <taxon>Campylobacter</taxon>
    </lineage>
</organism>
<comment type="function">
    <text evidence="1">Catalyzes the transfer of a ribosyl phosphate group from 5-phosphoribose 1-diphosphate to orotate, leading to the formation of orotidine monophosphate (OMP).</text>
</comment>
<comment type="catalytic activity">
    <reaction evidence="1">
        <text>orotidine 5'-phosphate + diphosphate = orotate + 5-phospho-alpha-D-ribose 1-diphosphate</text>
        <dbReference type="Rhea" id="RHEA:10380"/>
        <dbReference type="ChEBI" id="CHEBI:30839"/>
        <dbReference type="ChEBI" id="CHEBI:33019"/>
        <dbReference type="ChEBI" id="CHEBI:57538"/>
        <dbReference type="ChEBI" id="CHEBI:58017"/>
        <dbReference type="EC" id="2.4.2.10"/>
    </reaction>
</comment>
<comment type="cofactor">
    <cofactor evidence="1">
        <name>Mg(2+)</name>
        <dbReference type="ChEBI" id="CHEBI:18420"/>
    </cofactor>
</comment>
<comment type="pathway">
    <text evidence="1">Pyrimidine metabolism; UMP biosynthesis via de novo pathway; UMP from orotate: step 1/2.</text>
</comment>
<comment type="subunit">
    <text evidence="1">Homodimer.</text>
</comment>
<comment type="similarity">
    <text evidence="1">Belongs to the purine/pyrimidine phosphoribosyltransferase family. PyrE subfamily.</text>
</comment>
<keyword id="KW-0328">Glycosyltransferase</keyword>
<keyword id="KW-0460">Magnesium</keyword>
<keyword id="KW-0665">Pyrimidine biosynthesis</keyword>
<keyword id="KW-1185">Reference proteome</keyword>
<keyword id="KW-0808">Transferase</keyword>